<accession>A0LUJ2</accession>
<comment type="function">
    <text evidence="1">Catalyzes the attachment of alanine to tRNA(Ala) in a two-step reaction: alanine is first activated by ATP to form Ala-AMP and then transferred to the acceptor end of tRNA(Ala). Also edits incorrectly charged Ser-tRNA(Ala) and Gly-tRNA(Ala) via its editing domain.</text>
</comment>
<comment type="catalytic activity">
    <reaction evidence="1">
        <text>tRNA(Ala) + L-alanine + ATP = L-alanyl-tRNA(Ala) + AMP + diphosphate</text>
        <dbReference type="Rhea" id="RHEA:12540"/>
        <dbReference type="Rhea" id="RHEA-COMP:9657"/>
        <dbReference type="Rhea" id="RHEA-COMP:9923"/>
        <dbReference type="ChEBI" id="CHEBI:30616"/>
        <dbReference type="ChEBI" id="CHEBI:33019"/>
        <dbReference type="ChEBI" id="CHEBI:57972"/>
        <dbReference type="ChEBI" id="CHEBI:78442"/>
        <dbReference type="ChEBI" id="CHEBI:78497"/>
        <dbReference type="ChEBI" id="CHEBI:456215"/>
        <dbReference type="EC" id="6.1.1.7"/>
    </reaction>
</comment>
<comment type="cofactor">
    <cofactor evidence="1">
        <name>Zn(2+)</name>
        <dbReference type="ChEBI" id="CHEBI:29105"/>
    </cofactor>
    <text evidence="1">Binds 1 zinc ion per subunit.</text>
</comment>
<comment type="subcellular location">
    <subcellularLocation>
        <location evidence="1">Cytoplasm</location>
    </subcellularLocation>
</comment>
<comment type="domain">
    <text evidence="1">Consists of three domains; the N-terminal catalytic domain, the editing domain and the C-terminal C-Ala domain. The editing domain removes incorrectly charged amino acids, while the C-Ala domain, along with tRNA(Ala), serves as a bridge to cooperatively bring together the editing and aminoacylation centers thus stimulating deacylation of misacylated tRNAs.</text>
</comment>
<comment type="similarity">
    <text evidence="1">Belongs to the class-II aminoacyl-tRNA synthetase family.</text>
</comment>
<proteinExistence type="inferred from homology"/>
<reference key="1">
    <citation type="journal article" date="2009" name="Genome Res.">
        <title>Complete genome of the cellulolytic thermophile Acidothermus cellulolyticus 11B provides insights into its ecophysiological and evolutionary adaptations.</title>
        <authorList>
            <person name="Barabote R.D."/>
            <person name="Xie G."/>
            <person name="Leu D.H."/>
            <person name="Normand P."/>
            <person name="Necsulea A."/>
            <person name="Daubin V."/>
            <person name="Medigue C."/>
            <person name="Adney W.S."/>
            <person name="Xu X.C."/>
            <person name="Lapidus A."/>
            <person name="Parales R.E."/>
            <person name="Detter C."/>
            <person name="Pujic P."/>
            <person name="Bruce D."/>
            <person name="Lavire C."/>
            <person name="Challacombe J.F."/>
            <person name="Brettin T.S."/>
            <person name="Berry A.M."/>
        </authorList>
    </citation>
    <scope>NUCLEOTIDE SEQUENCE [LARGE SCALE GENOMIC DNA]</scope>
    <source>
        <strain>ATCC 43068 / DSM 8971 / 11B</strain>
    </source>
</reference>
<evidence type="ECO:0000255" key="1">
    <source>
        <dbReference type="HAMAP-Rule" id="MF_00036"/>
    </source>
</evidence>
<feature type="chain" id="PRO_0000347470" description="Alanine--tRNA ligase">
    <location>
        <begin position="1"/>
        <end position="886"/>
    </location>
</feature>
<feature type="binding site" evidence="1">
    <location>
        <position position="570"/>
    </location>
    <ligand>
        <name>Zn(2+)</name>
        <dbReference type="ChEBI" id="CHEBI:29105"/>
    </ligand>
</feature>
<feature type="binding site" evidence="1">
    <location>
        <position position="574"/>
    </location>
    <ligand>
        <name>Zn(2+)</name>
        <dbReference type="ChEBI" id="CHEBI:29105"/>
    </ligand>
</feature>
<feature type="binding site" evidence="1">
    <location>
        <position position="672"/>
    </location>
    <ligand>
        <name>Zn(2+)</name>
        <dbReference type="ChEBI" id="CHEBI:29105"/>
    </ligand>
</feature>
<feature type="binding site" evidence="1">
    <location>
        <position position="676"/>
    </location>
    <ligand>
        <name>Zn(2+)</name>
        <dbReference type="ChEBI" id="CHEBI:29105"/>
    </ligand>
</feature>
<keyword id="KW-0030">Aminoacyl-tRNA synthetase</keyword>
<keyword id="KW-0067">ATP-binding</keyword>
<keyword id="KW-0963">Cytoplasm</keyword>
<keyword id="KW-0436">Ligase</keyword>
<keyword id="KW-0479">Metal-binding</keyword>
<keyword id="KW-0547">Nucleotide-binding</keyword>
<keyword id="KW-0648">Protein biosynthesis</keyword>
<keyword id="KW-1185">Reference proteome</keyword>
<keyword id="KW-0694">RNA-binding</keyword>
<keyword id="KW-0820">tRNA-binding</keyword>
<keyword id="KW-0862">Zinc</keyword>
<organism>
    <name type="scientific">Acidothermus cellulolyticus (strain ATCC 43068 / DSM 8971 / 11B)</name>
    <dbReference type="NCBI Taxonomy" id="351607"/>
    <lineage>
        <taxon>Bacteria</taxon>
        <taxon>Bacillati</taxon>
        <taxon>Actinomycetota</taxon>
        <taxon>Actinomycetes</taxon>
        <taxon>Acidothermales</taxon>
        <taxon>Acidothermaceae</taxon>
        <taxon>Acidothermus</taxon>
    </lineage>
</organism>
<gene>
    <name evidence="1" type="primary">alaS</name>
    <name type="ordered locus">Acel_1330</name>
</gene>
<protein>
    <recommendedName>
        <fullName evidence="1">Alanine--tRNA ligase</fullName>
        <ecNumber evidence="1">6.1.1.7</ecNumber>
    </recommendedName>
    <alternativeName>
        <fullName evidence="1">Alanyl-tRNA synthetase</fullName>
        <shortName evidence="1">AlaRS</shortName>
    </alternativeName>
</protein>
<dbReference type="EC" id="6.1.1.7" evidence="1"/>
<dbReference type="EMBL" id="CP000481">
    <property type="protein sequence ID" value="ABK53102.1"/>
    <property type="molecule type" value="Genomic_DNA"/>
</dbReference>
<dbReference type="RefSeq" id="WP_011720165.1">
    <property type="nucleotide sequence ID" value="NC_008578.1"/>
</dbReference>
<dbReference type="SMR" id="A0LUJ2"/>
<dbReference type="FunCoup" id="A0LUJ2">
    <property type="interactions" value="362"/>
</dbReference>
<dbReference type="STRING" id="351607.Acel_1330"/>
<dbReference type="KEGG" id="ace:Acel_1330"/>
<dbReference type="eggNOG" id="COG0013">
    <property type="taxonomic scope" value="Bacteria"/>
</dbReference>
<dbReference type="HOGENOM" id="CLU_004485_1_1_11"/>
<dbReference type="InParanoid" id="A0LUJ2"/>
<dbReference type="OrthoDB" id="9803884at2"/>
<dbReference type="Proteomes" id="UP000008221">
    <property type="component" value="Chromosome"/>
</dbReference>
<dbReference type="GO" id="GO:0005829">
    <property type="term" value="C:cytosol"/>
    <property type="evidence" value="ECO:0007669"/>
    <property type="project" value="TreeGrafter"/>
</dbReference>
<dbReference type="GO" id="GO:0004813">
    <property type="term" value="F:alanine-tRNA ligase activity"/>
    <property type="evidence" value="ECO:0007669"/>
    <property type="project" value="UniProtKB-UniRule"/>
</dbReference>
<dbReference type="GO" id="GO:0002161">
    <property type="term" value="F:aminoacyl-tRNA deacylase activity"/>
    <property type="evidence" value="ECO:0007669"/>
    <property type="project" value="TreeGrafter"/>
</dbReference>
<dbReference type="GO" id="GO:0005524">
    <property type="term" value="F:ATP binding"/>
    <property type="evidence" value="ECO:0007669"/>
    <property type="project" value="UniProtKB-UniRule"/>
</dbReference>
<dbReference type="GO" id="GO:0000049">
    <property type="term" value="F:tRNA binding"/>
    <property type="evidence" value="ECO:0007669"/>
    <property type="project" value="UniProtKB-KW"/>
</dbReference>
<dbReference type="GO" id="GO:0008270">
    <property type="term" value="F:zinc ion binding"/>
    <property type="evidence" value="ECO:0007669"/>
    <property type="project" value="UniProtKB-UniRule"/>
</dbReference>
<dbReference type="GO" id="GO:0006419">
    <property type="term" value="P:alanyl-tRNA aminoacylation"/>
    <property type="evidence" value="ECO:0007669"/>
    <property type="project" value="UniProtKB-UniRule"/>
</dbReference>
<dbReference type="CDD" id="cd00673">
    <property type="entry name" value="AlaRS_core"/>
    <property type="match status" value="1"/>
</dbReference>
<dbReference type="FunFam" id="2.40.30.130:FF:000001">
    <property type="entry name" value="Alanine--tRNA ligase"/>
    <property type="match status" value="1"/>
</dbReference>
<dbReference type="FunFam" id="3.10.310.40:FF:000001">
    <property type="entry name" value="Alanine--tRNA ligase"/>
    <property type="match status" value="1"/>
</dbReference>
<dbReference type="FunFam" id="3.30.54.20:FF:000001">
    <property type="entry name" value="Alanine--tRNA ligase"/>
    <property type="match status" value="1"/>
</dbReference>
<dbReference type="FunFam" id="3.30.930.10:FF:000004">
    <property type="entry name" value="Alanine--tRNA ligase"/>
    <property type="match status" value="1"/>
</dbReference>
<dbReference type="FunFam" id="3.30.980.10:FF:000004">
    <property type="entry name" value="Alanine--tRNA ligase, cytoplasmic"/>
    <property type="match status" value="1"/>
</dbReference>
<dbReference type="Gene3D" id="2.40.30.130">
    <property type="match status" value="1"/>
</dbReference>
<dbReference type="Gene3D" id="3.10.310.40">
    <property type="match status" value="1"/>
</dbReference>
<dbReference type="Gene3D" id="3.30.54.20">
    <property type="match status" value="1"/>
</dbReference>
<dbReference type="Gene3D" id="6.10.250.550">
    <property type="match status" value="1"/>
</dbReference>
<dbReference type="Gene3D" id="3.30.930.10">
    <property type="entry name" value="Bira Bifunctional Protein, Domain 2"/>
    <property type="match status" value="1"/>
</dbReference>
<dbReference type="Gene3D" id="3.30.980.10">
    <property type="entry name" value="Threonyl-trna Synthetase, Chain A, domain 2"/>
    <property type="match status" value="1"/>
</dbReference>
<dbReference type="HAMAP" id="MF_00036_B">
    <property type="entry name" value="Ala_tRNA_synth_B"/>
    <property type="match status" value="1"/>
</dbReference>
<dbReference type="InterPro" id="IPR045864">
    <property type="entry name" value="aa-tRNA-synth_II/BPL/LPL"/>
</dbReference>
<dbReference type="InterPro" id="IPR002318">
    <property type="entry name" value="Ala-tRNA-lgiase_IIc"/>
</dbReference>
<dbReference type="InterPro" id="IPR018162">
    <property type="entry name" value="Ala-tRNA-ligase_IIc_anticod-bd"/>
</dbReference>
<dbReference type="InterPro" id="IPR018165">
    <property type="entry name" value="Ala-tRNA-synth_IIc_core"/>
</dbReference>
<dbReference type="InterPro" id="IPR018164">
    <property type="entry name" value="Ala-tRNA-synth_IIc_N"/>
</dbReference>
<dbReference type="InterPro" id="IPR050058">
    <property type="entry name" value="Ala-tRNA_ligase"/>
</dbReference>
<dbReference type="InterPro" id="IPR023033">
    <property type="entry name" value="Ala_tRNA_ligase_euk/bac"/>
</dbReference>
<dbReference type="InterPro" id="IPR003156">
    <property type="entry name" value="DHHA1_dom"/>
</dbReference>
<dbReference type="InterPro" id="IPR018163">
    <property type="entry name" value="Thr/Ala-tRNA-synth_IIc_edit"/>
</dbReference>
<dbReference type="InterPro" id="IPR009000">
    <property type="entry name" value="Transl_B-barrel_sf"/>
</dbReference>
<dbReference type="InterPro" id="IPR012947">
    <property type="entry name" value="tRNA_SAD"/>
</dbReference>
<dbReference type="NCBIfam" id="TIGR00344">
    <property type="entry name" value="alaS"/>
    <property type="match status" value="1"/>
</dbReference>
<dbReference type="PANTHER" id="PTHR11777:SF9">
    <property type="entry name" value="ALANINE--TRNA LIGASE, CYTOPLASMIC"/>
    <property type="match status" value="1"/>
</dbReference>
<dbReference type="PANTHER" id="PTHR11777">
    <property type="entry name" value="ALANYL-TRNA SYNTHETASE"/>
    <property type="match status" value="1"/>
</dbReference>
<dbReference type="Pfam" id="PF02272">
    <property type="entry name" value="DHHA1"/>
    <property type="match status" value="1"/>
</dbReference>
<dbReference type="Pfam" id="PF01411">
    <property type="entry name" value="tRNA-synt_2c"/>
    <property type="match status" value="1"/>
</dbReference>
<dbReference type="Pfam" id="PF07973">
    <property type="entry name" value="tRNA_SAD"/>
    <property type="match status" value="1"/>
</dbReference>
<dbReference type="PRINTS" id="PR00980">
    <property type="entry name" value="TRNASYNTHALA"/>
</dbReference>
<dbReference type="SMART" id="SM00863">
    <property type="entry name" value="tRNA_SAD"/>
    <property type="match status" value="1"/>
</dbReference>
<dbReference type="SUPFAM" id="SSF55681">
    <property type="entry name" value="Class II aaRS and biotin synthetases"/>
    <property type="match status" value="1"/>
</dbReference>
<dbReference type="SUPFAM" id="SSF101353">
    <property type="entry name" value="Putative anticodon-binding domain of alanyl-tRNA synthetase (AlaRS)"/>
    <property type="match status" value="1"/>
</dbReference>
<dbReference type="SUPFAM" id="SSF55186">
    <property type="entry name" value="ThrRS/AlaRS common domain"/>
    <property type="match status" value="1"/>
</dbReference>
<dbReference type="SUPFAM" id="SSF50447">
    <property type="entry name" value="Translation proteins"/>
    <property type="match status" value="1"/>
</dbReference>
<dbReference type="PROSITE" id="PS50860">
    <property type="entry name" value="AA_TRNA_LIGASE_II_ALA"/>
    <property type="match status" value="1"/>
</dbReference>
<sequence>MESAEIARRWLAFFEKRDHVVVPSTPLVADDPELLFVVAGMQPFKPYFRGDAPAPWPRATSVQKVLRTPDIDEVGKTTRHATFFHMCGNFSFGDYFKETAIPLAWELLTTPVADGGYGFAPDRLWVTVYTDDDEAADIWHRVVGLPVDRIQRRGMADNFWSMGVPGPCGPCSEIYYDRGPEFGVGGGPVANEERYLEVWNLVFMQYERGPGGAKDNYPILGELPAKNIDTGMGLERMAAILQGVDNIYEIDTTRPILDKAAELTGQRYGSGGQNDVRLRMVADHIRAITMLVNDGVVPSNEERGYVLRRLMRRVVRAMRLLGAREPTMHELVATAIAVFTPQYPELSRNAERIFAVADGEEASFFSTLAAGTARFEAAVREAGGGVLSGEQAFVLHDTYGFPIDLTLEMAAEQGVTVDEEGFRALMAEQRRRAKEDAERRKTGAADRAAYRAAAELLGRPVEFTGYTERSGEAVVRGLLVDGAAVPAAHAGQRVEVVLDRTPFYAEGGGQLPDHGVLEFAAGRIDVDDVQQPLPGLIVHRGRVADGEITVGETVLARIDVDRRWAISRSHTATHMVHKAFREFLGDTAAQAGSENAPGRFRFDFTNPSAVPPSVLGEVEERVNDLLLHDLEVTAQIMRQQEAIASGAIAMFGEKYGDQVRVISIGDWSRELCGGTHVPHTGHLGVIKIVSESSIGAGVRRIEALVGLDAYRYLAREAVLVSQLAEQLKAPADELPDRIAGMLARLRDAEKELEKLRQARLLAEAPRLAAARVDVGGLAVVAARVDGDGVDADGLRLLATDLRQRLGGSAVVVLAGVAGGRPVVVAAVGSEALARGVKAGELVGVAAKRLGGGGGGRPDFAQGGGTNPAAVDDAVSAALDAVRAQVG</sequence>
<name>SYA_ACIC1</name>